<protein>
    <recommendedName>
        <fullName evidence="1">Bifunctional protein HldE</fullName>
    </recommendedName>
    <domain>
        <recommendedName>
            <fullName evidence="1">D-beta-D-heptose 7-phosphate kinase</fullName>
            <ecNumber evidence="1">2.7.1.167</ecNumber>
        </recommendedName>
        <alternativeName>
            <fullName evidence="1">D-beta-D-heptose 7-phosphotransferase</fullName>
        </alternativeName>
        <alternativeName>
            <fullName evidence="1">D-glycero-beta-D-manno-heptose-7-phosphate kinase</fullName>
        </alternativeName>
    </domain>
    <domain>
        <recommendedName>
            <fullName evidence="1">D-beta-D-heptose 1-phosphate adenylyltransferase</fullName>
            <ecNumber evidence="1">2.7.7.70</ecNumber>
        </recommendedName>
        <alternativeName>
            <fullName evidence="1">D-glycero-beta-D-manno-heptose 1-phosphate adenylyltransferase</fullName>
        </alternativeName>
    </domain>
</protein>
<accession>A0KTG8</accession>
<organism>
    <name type="scientific">Shewanella sp. (strain ANA-3)</name>
    <dbReference type="NCBI Taxonomy" id="94122"/>
    <lineage>
        <taxon>Bacteria</taxon>
        <taxon>Pseudomonadati</taxon>
        <taxon>Pseudomonadota</taxon>
        <taxon>Gammaproteobacteria</taxon>
        <taxon>Alteromonadales</taxon>
        <taxon>Shewanellaceae</taxon>
        <taxon>Shewanella</taxon>
    </lineage>
</organism>
<gene>
    <name evidence="1" type="primary">hldE</name>
    <name type="ordered locus">Shewana3_0849</name>
</gene>
<reference key="1">
    <citation type="submission" date="2006-09" db="EMBL/GenBank/DDBJ databases">
        <title>Complete sequence of chromosome 1 of Shewanella sp. ANA-3.</title>
        <authorList>
            <person name="Copeland A."/>
            <person name="Lucas S."/>
            <person name="Lapidus A."/>
            <person name="Barry K."/>
            <person name="Detter J.C."/>
            <person name="Glavina del Rio T."/>
            <person name="Hammon N."/>
            <person name="Israni S."/>
            <person name="Dalin E."/>
            <person name="Tice H."/>
            <person name="Pitluck S."/>
            <person name="Chertkov O."/>
            <person name="Brettin T."/>
            <person name="Bruce D."/>
            <person name="Han C."/>
            <person name="Tapia R."/>
            <person name="Gilna P."/>
            <person name="Schmutz J."/>
            <person name="Larimer F."/>
            <person name="Land M."/>
            <person name="Hauser L."/>
            <person name="Kyrpides N."/>
            <person name="Kim E."/>
            <person name="Newman D."/>
            <person name="Salticov C."/>
            <person name="Konstantinidis K."/>
            <person name="Klappenback J."/>
            <person name="Tiedje J."/>
            <person name="Richardson P."/>
        </authorList>
    </citation>
    <scope>NUCLEOTIDE SEQUENCE [LARGE SCALE GENOMIC DNA]</scope>
    <source>
        <strain>ANA-3</strain>
    </source>
</reference>
<dbReference type="EC" id="2.7.1.167" evidence="1"/>
<dbReference type="EC" id="2.7.7.70" evidence="1"/>
<dbReference type="EMBL" id="CP000469">
    <property type="protein sequence ID" value="ABK47087.1"/>
    <property type="molecule type" value="Genomic_DNA"/>
</dbReference>
<dbReference type="RefSeq" id="WP_011715992.1">
    <property type="nucleotide sequence ID" value="NC_008577.1"/>
</dbReference>
<dbReference type="SMR" id="A0KTG8"/>
<dbReference type="STRING" id="94122.Shewana3_0849"/>
<dbReference type="KEGG" id="shn:Shewana3_0849"/>
<dbReference type="eggNOG" id="COG0615">
    <property type="taxonomic scope" value="Bacteria"/>
</dbReference>
<dbReference type="eggNOG" id="COG2870">
    <property type="taxonomic scope" value="Bacteria"/>
</dbReference>
<dbReference type="HOGENOM" id="CLU_021150_2_1_6"/>
<dbReference type="OrthoDB" id="9802794at2"/>
<dbReference type="UniPathway" id="UPA00356">
    <property type="reaction ID" value="UER00437"/>
</dbReference>
<dbReference type="UniPathway" id="UPA00356">
    <property type="reaction ID" value="UER00439"/>
</dbReference>
<dbReference type="Proteomes" id="UP000002589">
    <property type="component" value="Chromosome"/>
</dbReference>
<dbReference type="GO" id="GO:0005829">
    <property type="term" value="C:cytosol"/>
    <property type="evidence" value="ECO:0007669"/>
    <property type="project" value="TreeGrafter"/>
</dbReference>
<dbReference type="GO" id="GO:0005524">
    <property type="term" value="F:ATP binding"/>
    <property type="evidence" value="ECO:0007669"/>
    <property type="project" value="UniProtKB-UniRule"/>
</dbReference>
<dbReference type="GO" id="GO:0033785">
    <property type="term" value="F:heptose 7-phosphate kinase activity"/>
    <property type="evidence" value="ECO:0007669"/>
    <property type="project" value="UniProtKB-UniRule"/>
</dbReference>
<dbReference type="GO" id="GO:0033786">
    <property type="term" value="F:heptose-1-phosphate adenylyltransferase activity"/>
    <property type="evidence" value="ECO:0007669"/>
    <property type="project" value="UniProtKB-UniRule"/>
</dbReference>
<dbReference type="GO" id="GO:0016773">
    <property type="term" value="F:phosphotransferase activity, alcohol group as acceptor"/>
    <property type="evidence" value="ECO:0007669"/>
    <property type="project" value="InterPro"/>
</dbReference>
<dbReference type="GO" id="GO:0097171">
    <property type="term" value="P:ADP-L-glycero-beta-D-manno-heptose biosynthetic process"/>
    <property type="evidence" value="ECO:0007669"/>
    <property type="project" value="UniProtKB-UniPathway"/>
</dbReference>
<dbReference type="CDD" id="cd01172">
    <property type="entry name" value="RfaE_like"/>
    <property type="match status" value="1"/>
</dbReference>
<dbReference type="FunFam" id="3.40.1190.20:FF:000002">
    <property type="entry name" value="Bifunctional protein HldE"/>
    <property type="match status" value="1"/>
</dbReference>
<dbReference type="FunFam" id="3.40.50.620:FF:000028">
    <property type="entry name" value="Bifunctional protein HldE"/>
    <property type="match status" value="1"/>
</dbReference>
<dbReference type="Gene3D" id="3.40.1190.20">
    <property type="match status" value="1"/>
</dbReference>
<dbReference type="Gene3D" id="3.40.50.620">
    <property type="entry name" value="HUPs"/>
    <property type="match status" value="1"/>
</dbReference>
<dbReference type="HAMAP" id="MF_01603">
    <property type="entry name" value="HldE"/>
    <property type="match status" value="1"/>
</dbReference>
<dbReference type="InterPro" id="IPR023030">
    <property type="entry name" value="Bifunc_HldE"/>
</dbReference>
<dbReference type="InterPro" id="IPR002173">
    <property type="entry name" value="Carboh/pur_kinase_PfkB_CS"/>
</dbReference>
<dbReference type="InterPro" id="IPR004821">
    <property type="entry name" value="Cyt_trans-like"/>
</dbReference>
<dbReference type="InterPro" id="IPR011611">
    <property type="entry name" value="PfkB_dom"/>
</dbReference>
<dbReference type="InterPro" id="IPR011913">
    <property type="entry name" value="RfaE_dom_I"/>
</dbReference>
<dbReference type="InterPro" id="IPR011914">
    <property type="entry name" value="RfaE_dom_II"/>
</dbReference>
<dbReference type="InterPro" id="IPR029056">
    <property type="entry name" value="Ribokinase-like"/>
</dbReference>
<dbReference type="InterPro" id="IPR014729">
    <property type="entry name" value="Rossmann-like_a/b/a_fold"/>
</dbReference>
<dbReference type="NCBIfam" id="TIGR00125">
    <property type="entry name" value="cyt_tran_rel"/>
    <property type="match status" value="1"/>
</dbReference>
<dbReference type="NCBIfam" id="NF008454">
    <property type="entry name" value="PRK11316.1"/>
    <property type="match status" value="1"/>
</dbReference>
<dbReference type="NCBIfam" id="TIGR02198">
    <property type="entry name" value="rfaE_dom_I"/>
    <property type="match status" value="1"/>
</dbReference>
<dbReference type="NCBIfam" id="TIGR02199">
    <property type="entry name" value="rfaE_dom_II"/>
    <property type="match status" value="1"/>
</dbReference>
<dbReference type="PANTHER" id="PTHR46969">
    <property type="entry name" value="BIFUNCTIONAL PROTEIN HLDE"/>
    <property type="match status" value="1"/>
</dbReference>
<dbReference type="PANTHER" id="PTHR46969:SF1">
    <property type="entry name" value="BIFUNCTIONAL PROTEIN HLDE"/>
    <property type="match status" value="1"/>
</dbReference>
<dbReference type="Pfam" id="PF01467">
    <property type="entry name" value="CTP_transf_like"/>
    <property type="match status" value="1"/>
</dbReference>
<dbReference type="Pfam" id="PF00294">
    <property type="entry name" value="PfkB"/>
    <property type="match status" value="1"/>
</dbReference>
<dbReference type="SUPFAM" id="SSF52374">
    <property type="entry name" value="Nucleotidylyl transferase"/>
    <property type="match status" value="1"/>
</dbReference>
<dbReference type="SUPFAM" id="SSF53613">
    <property type="entry name" value="Ribokinase-like"/>
    <property type="match status" value="1"/>
</dbReference>
<dbReference type="PROSITE" id="PS00583">
    <property type="entry name" value="PFKB_KINASES_1"/>
    <property type="match status" value="1"/>
</dbReference>
<dbReference type="PROSITE" id="PS00584">
    <property type="entry name" value="PFKB_KINASES_2"/>
    <property type="match status" value="1"/>
</dbReference>
<keyword id="KW-0067">ATP-binding</keyword>
<keyword id="KW-0119">Carbohydrate metabolism</keyword>
<keyword id="KW-0418">Kinase</keyword>
<keyword id="KW-0511">Multifunctional enzyme</keyword>
<keyword id="KW-0547">Nucleotide-binding</keyword>
<keyword id="KW-0548">Nucleotidyltransferase</keyword>
<keyword id="KW-0808">Transferase</keyword>
<proteinExistence type="inferred from homology"/>
<evidence type="ECO:0000255" key="1">
    <source>
        <dbReference type="HAMAP-Rule" id="MF_01603"/>
    </source>
</evidence>
<sequence length="476" mass="50423">MKVSLPAFEKAKVLVVGDVMLDRYWVGPTGRISPEAPVPVVKINQVEDRPGGAANVALNIATLGGQVQLAGLVGEDDTAKALTLGVQALGVEPQWLNIADKPTITKLRVLSRNQQLIRLDFEESFDKQDSARLLKQSEALLDSVDVVVLSDYAKGAIDKPQDFIALARAKGVKVLVDPKGSDFSRYHGASLITPNMSEFEAVVGAVTSEADLLEKARGLLNKHQFDAILVTRSEKGMTLVTANAPELHIPTVAREVYDVTGAGDTVISALATSLAAGAELPQACAIANTAAGVVVGKLGTSTVSRIELIEALALHHGESGFGVVSEDQLAYALEQAKLRGERVVMTNGCFDILHAGHVSYLKQAKALGDRLIVAVNDDASVKRLKGEGRPVNQVDRRMAVLAGLAAVDWVVPFSEDTPQRIIARLLPDLLVKGGDYKVEDIAGGAEVIAAGGQVQVLGFEDGISTTAIIQNIMAKQ</sequence>
<comment type="function">
    <text evidence="1">Catalyzes the phosphorylation of D-glycero-D-manno-heptose 7-phosphate at the C-1 position to selectively form D-glycero-beta-D-manno-heptose-1,7-bisphosphate.</text>
</comment>
<comment type="function">
    <text evidence="1">Catalyzes the ADP transfer from ATP to D-glycero-beta-D-manno-heptose 1-phosphate, yielding ADP-D-glycero-beta-D-manno-heptose.</text>
</comment>
<comment type="catalytic activity">
    <reaction evidence="1">
        <text>D-glycero-beta-D-manno-heptose 7-phosphate + ATP = D-glycero-beta-D-manno-heptose 1,7-bisphosphate + ADP + H(+)</text>
        <dbReference type="Rhea" id="RHEA:27473"/>
        <dbReference type="ChEBI" id="CHEBI:15378"/>
        <dbReference type="ChEBI" id="CHEBI:30616"/>
        <dbReference type="ChEBI" id="CHEBI:60204"/>
        <dbReference type="ChEBI" id="CHEBI:60208"/>
        <dbReference type="ChEBI" id="CHEBI:456216"/>
        <dbReference type="EC" id="2.7.1.167"/>
    </reaction>
</comment>
<comment type="catalytic activity">
    <reaction evidence="1">
        <text>D-glycero-beta-D-manno-heptose 1-phosphate + ATP + H(+) = ADP-D-glycero-beta-D-manno-heptose + diphosphate</text>
        <dbReference type="Rhea" id="RHEA:27465"/>
        <dbReference type="ChEBI" id="CHEBI:15378"/>
        <dbReference type="ChEBI" id="CHEBI:30616"/>
        <dbReference type="ChEBI" id="CHEBI:33019"/>
        <dbReference type="ChEBI" id="CHEBI:59967"/>
        <dbReference type="ChEBI" id="CHEBI:61593"/>
        <dbReference type="EC" id="2.7.7.70"/>
    </reaction>
</comment>
<comment type="pathway">
    <text evidence="1">Nucleotide-sugar biosynthesis; ADP-L-glycero-beta-D-manno-heptose biosynthesis; ADP-L-glycero-beta-D-manno-heptose from D-glycero-beta-D-manno-heptose 7-phosphate: step 1/4.</text>
</comment>
<comment type="pathway">
    <text evidence="1">Nucleotide-sugar biosynthesis; ADP-L-glycero-beta-D-manno-heptose biosynthesis; ADP-L-glycero-beta-D-manno-heptose from D-glycero-beta-D-manno-heptose 7-phosphate: step 3/4.</text>
</comment>
<comment type="subunit">
    <text evidence="1">Homodimer.</text>
</comment>
<comment type="similarity">
    <text evidence="1">In the N-terminal section; belongs to the carbohydrate kinase PfkB family.</text>
</comment>
<comment type="similarity">
    <text evidence="1">In the C-terminal section; belongs to the cytidylyltransferase family.</text>
</comment>
<name>HLDE_SHESA</name>
<feature type="chain" id="PRO_0000291690" description="Bifunctional protein HldE">
    <location>
        <begin position="1"/>
        <end position="476"/>
    </location>
</feature>
<feature type="region of interest" description="Ribokinase">
    <location>
        <begin position="1"/>
        <end position="319"/>
    </location>
</feature>
<feature type="region of interest" description="Cytidylyltransferase">
    <location>
        <begin position="345"/>
        <end position="476"/>
    </location>
</feature>
<feature type="active site" evidence="1">
    <location>
        <position position="264"/>
    </location>
</feature>
<feature type="binding site" evidence="1">
    <location>
        <begin position="195"/>
        <end position="198"/>
    </location>
    <ligand>
        <name>ATP</name>
        <dbReference type="ChEBI" id="CHEBI:30616"/>
    </ligand>
</feature>